<keyword id="KW-0496">Mitochondrion</keyword>
<keyword id="KW-1185">Reference proteome</keyword>
<keyword id="KW-0687">Ribonucleoprotein</keyword>
<keyword id="KW-0689">Ribosomal protein</keyword>
<keyword id="KW-0809">Transit peptide</keyword>
<name>RM34_SCHPO</name>
<accession>Q9P7L9</accession>
<reference key="1">
    <citation type="journal article" date="2002" name="Nature">
        <title>The genome sequence of Schizosaccharomyces pombe.</title>
        <authorList>
            <person name="Wood V."/>
            <person name="Gwilliam R."/>
            <person name="Rajandream M.A."/>
            <person name="Lyne M.H."/>
            <person name="Lyne R."/>
            <person name="Stewart A."/>
            <person name="Sgouros J.G."/>
            <person name="Peat N."/>
            <person name="Hayles J."/>
            <person name="Baker S.G."/>
            <person name="Basham D."/>
            <person name="Bowman S."/>
            <person name="Brooks K."/>
            <person name="Brown D."/>
            <person name="Brown S."/>
            <person name="Chillingworth T."/>
            <person name="Churcher C.M."/>
            <person name="Collins M."/>
            <person name="Connor R."/>
            <person name="Cronin A."/>
            <person name="Davis P."/>
            <person name="Feltwell T."/>
            <person name="Fraser A."/>
            <person name="Gentles S."/>
            <person name="Goble A."/>
            <person name="Hamlin N."/>
            <person name="Harris D.E."/>
            <person name="Hidalgo J."/>
            <person name="Hodgson G."/>
            <person name="Holroyd S."/>
            <person name="Hornsby T."/>
            <person name="Howarth S."/>
            <person name="Huckle E.J."/>
            <person name="Hunt S."/>
            <person name="Jagels K."/>
            <person name="James K.D."/>
            <person name="Jones L."/>
            <person name="Jones M."/>
            <person name="Leather S."/>
            <person name="McDonald S."/>
            <person name="McLean J."/>
            <person name="Mooney P."/>
            <person name="Moule S."/>
            <person name="Mungall K.L."/>
            <person name="Murphy L.D."/>
            <person name="Niblett D."/>
            <person name="Odell C."/>
            <person name="Oliver K."/>
            <person name="O'Neil S."/>
            <person name="Pearson D."/>
            <person name="Quail M.A."/>
            <person name="Rabbinowitsch E."/>
            <person name="Rutherford K.M."/>
            <person name="Rutter S."/>
            <person name="Saunders D."/>
            <person name="Seeger K."/>
            <person name="Sharp S."/>
            <person name="Skelton J."/>
            <person name="Simmonds M.N."/>
            <person name="Squares R."/>
            <person name="Squares S."/>
            <person name="Stevens K."/>
            <person name="Taylor K."/>
            <person name="Taylor R.G."/>
            <person name="Tivey A."/>
            <person name="Walsh S.V."/>
            <person name="Warren T."/>
            <person name="Whitehead S."/>
            <person name="Woodward J.R."/>
            <person name="Volckaert G."/>
            <person name="Aert R."/>
            <person name="Robben J."/>
            <person name="Grymonprez B."/>
            <person name="Weltjens I."/>
            <person name="Vanstreels E."/>
            <person name="Rieger M."/>
            <person name="Schaefer M."/>
            <person name="Mueller-Auer S."/>
            <person name="Gabel C."/>
            <person name="Fuchs M."/>
            <person name="Duesterhoeft A."/>
            <person name="Fritzc C."/>
            <person name="Holzer E."/>
            <person name="Moestl D."/>
            <person name="Hilbert H."/>
            <person name="Borzym K."/>
            <person name="Langer I."/>
            <person name="Beck A."/>
            <person name="Lehrach H."/>
            <person name="Reinhardt R."/>
            <person name="Pohl T.M."/>
            <person name="Eger P."/>
            <person name="Zimmermann W."/>
            <person name="Wedler H."/>
            <person name="Wambutt R."/>
            <person name="Purnelle B."/>
            <person name="Goffeau A."/>
            <person name="Cadieu E."/>
            <person name="Dreano S."/>
            <person name="Gloux S."/>
            <person name="Lelaure V."/>
            <person name="Mottier S."/>
            <person name="Galibert F."/>
            <person name="Aves S.J."/>
            <person name="Xiang Z."/>
            <person name="Hunt C."/>
            <person name="Moore K."/>
            <person name="Hurst S.M."/>
            <person name="Lucas M."/>
            <person name="Rochet M."/>
            <person name="Gaillardin C."/>
            <person name="Tallada V.A."/>
            <person name="Garzon A."/>
            <person name="Thode G."/>
            <person name="Daga R.R."/>
            <person name="Cruzado L."/>
            <person name="Jimenez J."/>
            <person name="Sanchez M."/>
            <person name="del Rey F."/>
            <person name="Benito J."/>
            <person name="Dominguez A."/>
            <person name="Revuelta J.L."/>
            <person name="Moreno S."/>
            <person name="Armstrong J."/>
            <person name="Forsburg S.L."/>
            <person name="Cerutti L."/>
            <person name="Lowe T."/>
            <person name="McCombie W.R."/>
            <person name="Paulsen I."/>
            <person name="Potashkin J."/>
            <person name="Shpakovski G.V."/>
            <person name="Ussery D."/>
            <person name="Barrell B.G."/>
            <person name="Nurse P."/>
        </authorList>
    </citation>
    <scope>NUCLEOTIDE SEQUENCE [LARGE SCALE GENOMIC DNA]</scope>
    <source>
        <strain>972 / ATCC 24843</strain>
    </source>
</reference>
<reference key="2">
    <citation type="journal article" date="2006" name="Nat. Biotechnol.">
        <title>ORFeome cloning and global analysis of protein localization in the fission yeast Schizosaccharomyces pombe.</title>
        <authorList>
            <person name="Matsuyama A."/>
            <person name="Arai R."/>
            <person name="Yashiroda Y."/>
            <person name="Shirai A."/>
            <person name="Kamata A."/>
            <person name="Sekido S."/>
            <person name="Kobayashi Y."/>
            <person name="Hashimoto A."/>
            <person name="Hamamoto M."/>
            <person name="Hiraoka Y."/>
            <person name="Horinouchi S."/>
            <person name="Yoshida M."/>
        </authorList>
    </citation>
    <scope>SUBCELLULAR LOCATION [LARGE SCALE ANALYSIS]</scope>
</reference>
<organism>
    <name type="scientific">Schizosaccharomyces pombe (strain 972 / ATCC 24843)</name>
    <name type="common">Fission yeast</name>
    <dbReference type="NCBI Taxonomy" id="284812"/>
    <lineage>
        <taxon>Eukaryota</taxon>
        <taxon>Fungi</taxon>
        <taxon>Dikarya</taxon>
        <taxon>Ascomycota</taxon>
        <taxon>Taphrinomycotina</taxon>
        <taxon>Schizosaccharomycetes</taxon>
        <taxon>Schizosaccharomycetales</taxon>
        <taxon>Schizosaccharomycetaceae</taxon>
        <taxon>Schizosaccharomyces</taxon>
    </lineage>
</organism>
<feature type="transit peptide" description="Mitochondrion" evidence="2">
    <location>
        <begin position="1"/>
        <end position="20"/>
    </location>
</feature>
<feature type="chain" id="PRO_0000030522" description="Large ribosomal subunit protein bL34m">
    <location>
        <begin position="21"/>
        <end position="108"/>
    </location>
</feature>
<feature type="region of interest" description="Disordered" evidence="3">
    <location>
        <begin position="68"/>
        <end position="108"/>
    </location>
</feature>
<feature type="compositionally biased region" description="Basic residues" evidence="3">
    <location>
        <begin position="73"/>
        <end position="82"/>
    </location>
</feature>
<feature type="compositionally biased region" description="Basic residues" evidence="3">
    <location>
        <begin position="93"/>
        <end position="102"/>
    </location>
</feature>
<proteinExistence type="inferred from homology"/>
<protein>
    <recommendedName>
        <fullName evidence="5">Large ribosomal subunit protein bL34m</fullName>
    </recommendedName>
    <alternativeName>
        <fullName>Probable 54S ribosomal protein L34, mitochondrial</fullName>
        <shortName>L34mt</shortName>
    </alternativeName>
</protein>
<sequence length="108" mass="12735">MMFMQQFRNLLHPAMKGARNISILAGGGTMRGFPTRNPFNTATLYSSLPTMNIFGQMQQVRWKTYGNEYQPSNRKRKRKHGFLSRIRSVNGRRVLRDRRQKGRMYLSH</sequence>
<evidence type="ECO:0000250" key="1">
    <source>
        <dbReference type="UniProtKB" id="Q04598"/>
    </source>
</evidence>
<evidence type="ECO:0000255" key="2"/>
<evidence type="ECO:0000256" key="3">
    <source>
        <dbReference type="SAM" id="MobiDB-lite"/>
    </source>
</evidence>
<evidence type="ECO:0000269" key="4">
    <source>
    </source>
</evidence>
<evidence type="ECO:0000305" key="5"/>
<gene>
    <name type="primary">mrx14</name>
    <name type="ORF">SPBC21C3.04c</name>
</gene>
<dbReference type="EMBL" id="CU329671">
    <property type="protein sequence ID" value="CAB76040.1"/>
    <property type="molecule type" value="Genomic_DNA"/>
</dbReference>
<dbReference type="PIR" id="T50348">
    <property type="entry name" value="T50348"/>
</dbReference>
<dbReference type="RefSeq" id="NP_596584.1">
    <property type="nucleotide sequence ID" value="NM_001022504.2"/>
</dbReference>
<dbReference type="SMR" id="Q9P7L9"/>
<dbReference type="ComplexPortal" id="CPX-10323">
    <property type="entry name" value="54S mitochondrial large ribosomal subunit"/>
</dbReference>
<dbReference type="FunCoup" id="Q9P7L9">
    <property type="interactions" value="201"/>
</dbReference>
<dbReference type="STRING" id="284812.Q9P7L9"/>
<dbReference type="iPTMnet" id="Q9P7L9"/>
<dbReference type="PaxDb" id="4896-SPBC21C3.04c.1"/>
<dbReference type="EnsemblFungi" id="SPBC21C3.04c.1">
    <property type="protein sequence ID" value="SPBC21C3.04c.1:pep"/>
    <property type="gene ID" value="SPBC21C3.04c"/>
</dbReference>
<dbReference type="GeneID" id="2540621"/>
<dbReference type="KEGG" id="spo:2540621"/>
<dbReference type="PomBase" id="SPBC21C3.04c">
    <property type="gene designation" value="mrx14"/>
</dbReference>
<dbReference type="VEuPathDB" id="FungiDB:SPBC21C3.04c"/>
<dbReference type="eggNOG" id="KOG4612">
    <property type="taxonomic scope" value="Eukaryota"/>
</dbReference>
<dbReference type="HOGENOM" id="CLU_129938_0_1_1"/>
<dbReference type="InParanoid" id="Q9P7L9"/>
<dbReference type="PhylomeDB" id="Q9P7L9"/>
<dbReference type="PRO" id="PR:Q9P7L9"/>
<dbReference type="Proteomes" id="UP000002485">
    <property type="component" value="Chromosome II"/>
</dbReference>
<dbReference type="GO" id="GO:0005762">
    <property type="term" value="C:mitochondrial large ribosomal subunit"/>
    <property type="evidence" value="ECO:0000318"/>
    <property type="project" value="GO_Central"/>
</dbReference>
<dbReference type="GO" id="GO:0005739">
    <property type="term" value="C:mitochondrion"/>
    <property type="evidence" value="ECO:0007005"/>
    <property type="project" value="PomBase"/>
</dbReference>
<dbReference type="GO" id="GO:0003735">
    <property type="term" value="F:structural constituent of ribosome"/>
    <property type="evidence" value="ECO:0000250"/>
    <property type="project" value="PomBase"/>
</dbReference>
<dbReference type="GO" id="GO:0032543">
    <property type="term" value="P:mitochondrial translation"/>
    <property type="evidence" value="ECO:0000250"/>
    <property type="project" value="PomBase"/>
</dbReference>
<dbReference type="FunFam" id="1.10.287.3980:FF:000001">
    <property type="entry name" value="Mitochondrial ribosomal protein L34"/>
    <property type="match status" value="1"/>
</dbReference>
<dbReference type="Gene3D" id="1.10.287.3980">
    <property type="match status" value="1"/>
</dbReference>
<dbReference type="HAMAP" id="MF_00391">
    <property type="entry name" value="Ribosomal_bL34"/>
    <property type="match status" value="1"/>
</dbReference>
<dbReference type="InterPro" id="IPR000271">
    <property type="entry name" value="Ribosomal_bL34"/>
</dbReference>
<dbReference type="NCBIfam" id="TIGR01030">
    <property type="entry name" value="rpmH_bact"/>
    <property type="match status" value="1"/>
</dbReference>
<dbReference type="PANTHER" id="PTHR14503:SF4">
    <property type="entry name" value="LARGE RIBOSOMAL SUBUNIT PROTEIN BL34M"/>
    <property type="match status" value="1"/>
</dbReference>
<dbReference type="PANTHER" id="PTHR14503">
    <property type="entry name" value="MITOCHONDRIAL RIBOSOMAL PROTEIN 34 FAMILY MEMBER"/>
    <property type="match status" value="1"/>
</dbReference>
<dbReference type="Pfam" id="PF00468">
    <property type="entry name" value="Ribosomal_L34"/>
    <property type="match status" value="1"/>
</dbReference>
<comment type="function">
    <text evidence="1">Component of the mitochondrial ribosome (mitoribosome), a dedicated translation machinery responsible for the synthesis of mitochondrial genome-encoded proteins, including at least some of the essential transmembrane subunits of the mitochondrial respiratory chain. The mitoribosomes are attached to the mitochondrial inner membrane and translation products are cotranslationally integrated into the membrane.</text>
</comment>
<comment type="subunit">
    <text evidence="1">Component of the mitochondrial large ribosomal subunit (mt-LSU). Mature yeast 74S mitochondrial ribosomes consist of a small (37S) and a large (54S) subunit. The 37S small subunit contains a 15S ribosomal RNA (15S mt-rRNA) and at least 32 different proteins. The 54S large subunit contains a 21S rRNA (21S mt-rRNA) and at least 45 different proteins.</text>
</comment>
<comment type="subcellular location">
    <subcellularLocation>
        <location evidence="4">Mitochondrion</location>
    </subcellularLocation>
</comment>
<comment type="similarity">
    <text evidence="5">Belongs to the bacterial ribosomal protein bL34 family.</text>
</comment>